<organism>
    <name type="scientific">Escherichia coli</name>
    <dbReference type="NCBI Taxonomy" id="562"/>
    <lineage>
        <taxon>Bacteria</taxon>
        <taxon>Pseudomonadati</taxon>
        <taxon>Pseudomonadota</taxon>
        <taxon>Gammaproteobacteria</taxon>
        <taxon>Enterobacterales</taxon>
        <taxon>Enterobacteriaceae</taxon>
        <taxon>Escherichia</taxon>
    </lineage>
</organism>
<name>ATP83_ECOLX</name>
<proteinExistence type="evidence at protein level"/>
<sequence>MEQNLPSRITKLIKKSESGDFASSYQLYKVFGSKEYGVEPDEKMSDYFKELSAKQLEGGQLRVADIHLENYKGFESLIMDFSMKKNSTILVGNNGCGKSTILDAIQKGLTHLSSRLSTRSHNGDGIEKHELRKGQNYASIAINYDYMGIRFPMIIATTEPGYEDRAKSNYSGINELGSIFKTAHSINPNVSFPLIAMYTVERANDVSTRDIENSEEIKEAQIWDKFKAYNKSLTGKADFKLFFRWFKELIEIENSDNADITALRAEIRAKEKDLDNPLLKALLAENKNSETTKKLLEDHQNSLKVLKEKLNSYYSVNSKTLHTVEDAMYSFLPGFSNLKLQRAPLDLIVDKNNVSLSVLQLSQGEKTILALIADIARRLTLLNPNSVNPLDGTGIVLIDEIDLHLHPSWQQNIIPRLEKTFKNIQFIVTTHSPQVCHTIDSQNIWLLKNGQKFKAPKGVRGAISSWVLENLFEVAQRPPEDKYTKLLQEYKNLVFSEKYASEDARKLGATLSQHFGPDDETLVELKLEIEKRIWEDDFEKDQ</sequence>
<comment type="function">
    <text evidence="1">Probable ATPase component of antiviral defense system retron Ec83, composed of a non-coding RNA (ncRNA), a reverse transcriptase (RT), this protein and a putative HNH endonuclease. Expression of retron Ec83 confers protection against bacteriophage T2, T4 and T6. At multiplicity of infection (MOI) of 0.02 cultures slow growth when infected with T4 but do not collapse, at MOI 2 cultures enter growth stasis.</text>
</comment>
<evidence type="ECO:0000269" key="1">
    <source>
    </source>
</evidence>
<evidence type="ECO:0000303" key="2">
    <source>
    </source>
</evidence>
<evidence type="ECO:0000305" key="3"/>
<evidence type="ECO:0000305" key="4">
    <source>
    </source>
</evidence>
<evidence type="ECO:0000312" key="5">
    <source>
        <dbReference type="EMBL" id="CAA78294.1"/>
    </source>
</evidence>
<evidence type="ECO:0000312" key="6">
    <source>
        <dbReference type="EMBL" id="CXYK01000012"/>
    </source>
</evidence>
<keyword id="KW-0051">Antiviral defense</keyword>
<keyword id="KW-0067">ATP-binding</keyword>
<keyword id="KW-0547">Nucleotide-binding</keyword>
<gene>
    <name type="ORF">Ga0124318_11282</name>
</gene>
<accession>Q47527</accession>
<protein>
    <recommendedName>
        <fullName evidence="2">Retron Ec83 probable ATPase</fullName>
    </recommendedName>
</protein>
<reference evidence="5" key="1">
    <citation type="journal article" date="1992" name="Mol. Microbiol.">
        <title>Structure and biosynthesis of unbranched multicopy single-stranded DNA by reverse transcriptase in a clinical Escherichia coli isolate.</title>
        <authorList>
            <person name="Lim D."/>
        </authorList>
    </citation>
    <scope>NUCLEOTIDE SEQUENCE [GENOMIC DNA]</scope>
    <scope>PUTATIVE FUNCTION</scope>
    <scope>DOMAIN</scope>
    <source>
        <strain>Clinical strain 161</strain>
    </source>
</reference>
<reference evidence="6" key="2">
    <citation type="submission" date="2015-08" db="EMBL/GenBank/DDBJ databases">
        <authorList>
            <person name="Hur Y.J."/>
        </authorList>
    </citation>
    <scope>NUCLEOTIDE SEQUENCE [LARGE SCALE GENOMIC DNA]</scope>
    <source>
        <strain>05-2753</strain>
    </source>
</reference>
<reference key="3">
    <citation type="journal article" date="2020" name="Cell">
        <title>Bacterial Retrons Function In Anti-Phage Defense.</title>
        <authorList>
            <person name="Millman A."/>
            <person name="Bernheim A."/>
            <person name="Stokar-Avihail A."/>
            <person name="Fedorenko T."/>
            <person name="Voichek M."/>
            <person name="Leavitt A."/>
            <person name="Oppenheimer-Shaanan Y."/>
            <person name="Sorek R."/>
        </authorList>
    </citation>
    <scope>FUNCTION IN ANTIVIRAL DEFENSE</scope>
    <scope>IDENTIFICATION AS A RETRON</scope>
    <source>
        <strain>05-2753</strain>
    </source>
</reference>
<feature type="chain" id="PRO_0000456025" description="Retron Ec83 probable ATPase">
    <location>
        <begin position="1"/>
        <end position="542"/>
    </location>
</feature>
<feature type="short sequence motif" description="ATP-binding" evidence="4">
    <location>
        <begin position="92"/>
        <end position="99"/>
    </location>
</feature>
<feature type="sequence conflict" description="In Ref. 1; CAA78294." evidence="3" ref="1">
    <original>GVRGAISSWVLENLFEVAQRPPEDKYTKLLQEYKNLVFSEKYASEDARKLGATLSQHFGPDDETLVELKLEIEKRIWEDDFEKDQ</original>
    <variation>ELEEQYLLGYWRTCSKLLKGRQRISTQNSYRNIKI</variation>
    <location>
        <begin position="458"/>
        <end position="542"/>
    </location>
</feature>
<dbReference type="EMBL" id="Z12832">
    <property type="protein sequence ID" value="CAA78294.1"/>
    <property type="molecule type" value="Genomic_DNA"/>
</dbReference>
<dbReference type="EMBL" id="CXYK01000012">
    <property type="status" value="NOT_ANNOTATED_CDS"/>
    <property type="molecule type" value="Genomic_DNA"/>
</dbReference>
<dbReference type="PIR" id="S28007">
    <property type="entry name" value="S28007"/>
</dbReference>
<dbReference type="GO" id="GO:0005524">
    <property type="term" value="F:ATP binding"/>
    <property type="evidence" value="ECO:0007669"/>
    <property type="project" value="UniProtKB-KW"/>
</dbReference>
<dbReference type="GO" id="GO:0016887">
    <property type="term" value="F:ATP hydrolysis activity"/>
    <property type="evidence" value="ECO:0007669"/>
    <property type="project" value="InterPro"/>
</dbReference>
<dbReference type="GO" id="GO:0051607">
    <property type="term" value="P:defense response to virus"/>
    <property type="evidence" value="ECO:0007669"/>
    <property type="project" value="UniProtKB-KW"/>
</dbReference>
<dbReference type="GO" id="GO:0000731">
    <property type="term" value="P:DNA synthesis involved in DNA repair"/>
    <property type="evidence" value="ECO:0007669"/>
    <property type="project" value="TreeGrafter"/>
</dbReference>
<dbReference type="GO" id="GO:0006302">
    <property type="term" value="P:double-strand break repair"/>
    <property type="evidence" value="ECO:0007669"/>
    <property type="project" value="TreeGrafter"/>
</dbReference>
<dbReference type="CDD" id="cd00267">
    <property type="entry name" value="ABC_ATPase"/>
    <property type="match status" value="1"/>
</dbReference>
<dbReference type="Gene3D" id="3.40.50.300">
    <property type="entry name" value="P-loop containing nucleotide triphosphate hydrolases"/>
    <property type="match status" value="1"/>
</dbReference>
<dbReference type="InterPro" id="IPR003593">
    <property type="entry name" value="AAA+_ATPase"/>
</dbReference>
<dbReference type="InterPro" id="IPR041685">
    <property type="entry name" value="AAA_GajA/Old/RecF-like"/>
</dbReference>
<dbReference type="InterPro" id="IPR027417">
    <property type="entry name" value="P-loop_NTPase"/>
</dbReference>
<dbReference type="InterPro" id="IPR053498">
    <property type="entry name" value="Retron_ATPase"/>
</dbReference>
<dbReference type="NCBIfam" id="NF041760">
    <property type="entry name" value="PtuA"/>
    <property type="match status" value="1"/>
</dbReference>
<dbReference type="PANTHER" id="PTHR32182:SF23">
    <property type="entry name" value="ATP BINDING PROTEIN"/>
    <property type="match status" value="1"/>
</dbReference>
<dbReference type="PANTHER" id="PTHR32182">
    <property type="entry name" value="DNA REPLICATION AND REPAIR PROTEIN RECF"/>
    <property type="match status" value="1"/>
</dbReference>
<dbReference type="Pfam" id="PF13175">
    <property type="entry name" value="AAA_15"/>
    <property type="match status" value="1"/>
</dbReference>
<dbReference type="SMART" id="SM00382">
    <property type="entry name" value="AAA"/>
    <property type="match status" value="1"/>
</dbReference>
<dbReference type="SUPFAM" id="SSF52540">
    <property type="entry name" value="P-loop containing nucleoside triphosphate hydrolases"/>
    <property type="match status" value="1"/>
</dbReference>